<gene>
    <name type="primary">gh</name>
</gene>
<organism>
    <name type="scientific">Trichopodus trichopterus</name>
    <name type="common">Three spot gourami</name>
    <name type="synonym">Trichogaster trichopterus</name>
    <dbReference type="NCBI Taxonomy" id="96903"/>
    <lineage>
        <taxon>Eukaryota</taxon>
        <taxon>Metazoa</taxon>
        <taxon>Chordata</taxon>
        <taxon>Craniata</taxon>
        <taxon>Vertebrata</taxon>
        <taxon>Euteleostomi</taxon>
        <taxon>Actinopterygii</taxon>
        <taxon>Neopterygii</taxon>
        <taxon>Teleostei</taxon>
        <taxon>Neoteleostei</taxon>
        <taxon>Acanthomorphata</taxon>
        <taxon>Anabantaria</taxon>
        <taxon>Anabantiformes</taxon>
        <taxon>Anabantoidei</taxon>
        <taxon>Osphronemidae</taxon>
        <taxon>Luciocephalinae</taxon>
        <taxon>Trichopodus</taxon>
    </lineage>
</organism>
<keyword id="KW-1015">Disulfide bond</keyword>
<keyword id="KW-0372">Hormone</keyword>
<keyword id="KW-0479">Metal-binding</keyword>
<keyword id="KW-0873">Pyrrolidone carboxylic acid</keyword>
<keyword id="KW-0964">Secreted</keyword>
<keyword id="KW-0732">Signal</keyword>
<keyword id="KW-0862">Zinc</keyword>
<feature type="signal peptide" evidence="1">
    <location>
        <begin position="1"/>
        <end position="17"/>
    </location>
</feature>
<feature type="chain" id="PRO_0000033059" description="Somatotropin">
    <location>
        <begin position="18"/>
        <end position="204"/>
    </location>
</feature>
<feature type="binding site" evidence="1">
    <location>
        <position position="36"/>
    </location>
    <ligand>
        <name>Zn(2+)</name>
        <dbReference type="ChEBI" id="CHEBI:29105"/>
    </ligand>
</feature>
<feature type="binding site" evidence="1">
    <location>
        <position position="186"/>
    </location>
    <ligand>
        <name>Zn(2+)</name>
        <dbReference type="ChEBI" id="CHEBI:29105"/>
    </ligand>
</feature>
<feature type="modified residue" description="Pyrrolidone carboxylic acid" evidence="1">
    <location>
        <position position="18"/>
    </location>
</feature>
<feature type="disulfide bond" evidence="1">
    <location>
        <begin position="69"/>
        <end position="177"/>
    </location>
</feature>
<feature type="disulfide bond" evidence="1">
    <location>
        <begin position="194"/>
        <end position="202"/>
    </location>
</feature>
<protein>
    <recommendedName>
        <fullName>Somatotropin</fullName>
    </recommendedName>
    <alternativeName>
        <fullName>Growth hormone</fullName>
    </alternativeName>
</protein>
<proteinExistence type="evidence at transcript level"/>
<dbReference type="EMBL" id="AF157633">
    <property type="protein sequence ID" value="AAG60346.1"/>
    <property type="molecule type" value="mRNA"/>
</dbReference>
<dbReference type="SMR" id="Q98UF6"/>
<dbReference type="GO" id="GO:0005615">
    <property type="term" value="C:extracellular space"/>
    <property type="evidence" value="ECO:0007669"/>
    <property type="project" value="InterPro"/>
</dbReference>
<dbReference type="GO" id="GO:0070186">
    <property type="term" value="F:growth hormone activity"/>
    <property type="evidence" value="ECO:0007669"/>
    <property type="project" value="TreeGrafter"/>
</dbReference>
<dbReference type="GO" id="GO:0005131">
    <property type="term" value="F:growth hormone receptor binding"/>
    <property type="evidence" value="ECO:0007669"/>
    <property type="project" value="InterPro"/>
</dbReference>
<dbReference type="GO" id="GO:0046872">
    <property type="term" value="F:metal ion binding"/>
    <property type="evidence" value="ECO:0007669"/>
    <property type="project" value="UniProtKB-KW"/>
</dbReference>
<dbReference type="GO" id="GO:0048513">
    <property type="term" value="P:animal organ development"/>
    <property type="evidence" value="ECO:0007669"/>
    <property type="project" value="TreeGrafter"/>
</dbReference>
<dbReference type="GO" id="GO:0060396">
    <property type="term" value="P:growth hormone receptor signaling pathway"/>
    <property type="evidence" value="ECO:0007669"/>
    <property type="project" value="TreeGrafter"/>
</dbReference>
<dbReference type="GO" id="GO:0045927">
    <property type="term" value="P:positive regulation of growth"/>
    <property type="evidence" value="ECO:0007669"/>
    <property type="project" value="TreeGrafter"/>
</dbReference>
<dbReference type="GO" id="GO:0046427">
    <property type="term" value="P:positive regulation of receptor signaling pathway via JAK-STAT"/>
    <property type="evidence" value="ECO:0007669"/>
    <property type="project" value="TreeGrafter"/>
</dbReference>
<dbReference type="GO" id="GO:0031667">
    <property type="term" value="P:response to nutrient levels"/>
    <property type="evidence" value="ECO:0007669"/>
    <property type="project" value="TreeGrafter"/>
</dbReference>
<dbReference type="CDD" id="cd10285">
    <property type="entry name" value="somatotropin_like"/>
    <property type="match status" value="1"/>
</dbReference>
<dbReference type="FunFam" id="1.20.1250.10:FF:000009">
    <property type="entry name" value="Growth hormone"/>
    <property type="match status" value="1"/>
</dbReference>
<dbReference type="Gene3D" id="1.20.1250.10">
    <property type="match status" value="1"/>
</dbReference>
<dbReference type="InterPro" id="IPR009079">
    <property type="entry name" value="4_helix_cytokine-like_core"/>
</dbReference>
<dbReference type="InterPro" id="IPR034975">
    <property type="entry name" value="Somatotropin"/>
</dbReference>
<dbReference type="InterPro" id="IPR001400">
    <property type="entry name" value="Somatotropin/Prolactin"/>
</dbReference>
<dbReference type="InterPro" id="IPR018116">
    <property type="entry name" value="Somatotropin_CS"/>
</dbReference>
<dbReference type="PANTHER" id="PTHR11417:SF2">
    <property type="entry name" value="SOMATOTROPIN"/>
    <property type="match status" value="1"/>
</dbReference>
<dbReference type="PANTHER" id="PTHR11417">
    <property type="entry name" value="SOMATOTROPIN,PROLACTIN"/>
    <property type="match status" value="1"/>
</dbReference>
<dbReference type="Pfam" id="PF00103">
    <property type="entry name" value="Hormone_1"/>
    <property type="match status" value="1"/>
</dbReference>
<dbReference type="PRINTS" id="PR00836">
    <property type="entry name" value="SOMATOTROPIN"/>
</dbReference>
<dbReference type="SUPFAM" id="SSF47266">
    <property type="entry name" value="4-helical cytokines"/>
    <property type="match status" value="1"/>
</dbReference>
<dbReference type="PROSITE" id="PS00266">
    <property type="entry name" value="SOMATOTROPIN_1"/>
    <property type="match status" value="1"/>
</dbReference>
<dbReference type="PROSITE" id="PS00338">
    <property type="entry name" value="SOMATOTROPIN_2"/>
    <property type="match status" value="1"/>
</dbReference>
<reference key="1">
    <citation type="submission" date="1999-06" db="EMBL/GenBank/DDBJ databases">
        <title>The growth hormone of the blue gourami (Trichogaster trichopterus): cloning of its cDNA and analysis of its expression during oogenesis.</title>
        <authorList>
            <person name="Doron G."/>
            <person name="Ofir M."/>
            <person name="Jackson K."/>
            <person name="Czosnek H."/>
            <person name="Degani G."/>
        </authorList>
    </citation>
    <scope>NUCLEOTIDE SEQUENCE [MRNA]</scope>
</reference>
<comment type="function">
    <text>Growth hormone plays an important role in growth control and is involved in the regulation of several anabolic processes. Implicated as an osmoregulatory substance important for seawater adaptation.</text>
</comment>
<comment type="subcellular location">
    <subcellularLocation>
        <location>Secreted</location>
    </subcellularLocation>
</comment>
<comment type="similarity">
    <text evidence="2">Belongs to the somatotropin/prolactin family.</text>
</comment>
<sequence>MDKVLFLLFVLSLGVSSQPITDSQRLFSIAVSRVQHLHLLAQRLFTDFESSLQIEEQRQLNKIFLQDFCNSDYIISPIDKHETQRSSVLKLLSISYRLIESWEFPSRSLYGGSAQRYQISPKLSELMRGIQLLIKANQDGAEMFSDGVVPQLAPYGNYYQSLGEDESLRRSYELLACFKKDMHKVETYLTVAKCRLSPEANCTL</sequence>
<name>SOMA_TRITC</name>
<evidence type="ECO:0000250" key="1"/>
<evidence type="ECO:0000305" key="2"/>
<accession>Q98UF6</accession>